<evidence type="ECO:0000250" key="1">
    <source>
        <dbReference type="UniProtKB" id="Q6DWK3"/>
    </source>
</evidence>
<evidence type="ECO:0000255" key="2"/>
<evidence type="ECO:0000255" key="3">
    <source>
        <dbReference type="PROSITE-ProRule" id="PRU00498"/>
    </source>
</evidence>
<evidence type="ECO:0000255" key="4">
    <source>
        <dbReference type="PROSITE-ProRule" id="PRU01014"/>
    </source>
</evidence>
<evidence type="ECO:0000256" key="5">
    <source>
        <dbReference type="SAM" id="MobiDB-lite"/>
    </source>
</evidence>
<evidence type="ECO:0000269" key="6">
    <source>
    </source>
</evidence>
<evidence type="ECO:0000269" key="7">
    <source>
    </source>
</evidence>
<evidence type="ECO:0000269" key="8">
    <source>
    </source>
</evidence>
<evidence type="ECO:0000269" key="9">
    <source>
    </source>
</evidence>
<evidence type="ECO:0000269" key="10">
    <source>
    </source>
</evidence>
<evidence type="ECO:0000269" key="11">
    <source>
    </source>
</evidence>
<evidence type="ECO:0000269" key="12">
    <source>
    </source>
</evidence>
<evidence type="ECO:0000303" key="13">
    <source>
    </source>
</evidence>
<evidence type="ECO:0000305" key="14"/>
<evidence type="ECO:0000305" key="15">
    <source>
    </source>
</evidence>
<evidence type="ECO:0000305" key="16">
    <source>
    </source>
</evidence>
<evidence type="ECO:0000312" key="17">
    <source>
        <dbReference type="EMBL" id="AFR94916.1"/>
    </source>
</evidence>
<evidence type="ECO:0000312" key="18">
    <source>
        <dbReference type="Proteomes" id="UP000010091"/>
    </source>
</evidence>
<dbReference type="EC" id="3.5.1.41" evidence="15 16"/>
<dbReference type="EMBL" id="CP003824">
    <property type="protein sequence ID" value="AFR94916.1"/>
    <property type="molecule type" value="Genomic_DNA"/>
</dbReference>
<dbReference type="RefSeq" id="XP_012049402.1">
    <property type="nucleotide sequence ID" value="XM_012194012.1"/>
</dbReference>
<dbReference type="SMR" id="J9VND2"/>
<dbReference type="GlyCosmos" id="J9VND2">
    <property type="glycosylation" value="12 sites, No reported glycans"/>
</dbReference>
<dbReference type="GeneID" id="23884964"/>
<dbReference type="KEGG" id="cng:CNAG_01230"/>
<dbReference type="VEuPathDB" id="FungiDB:CNAG_01230"/>
<dbReference type="HOGENOM" id="CLU_035539_0_0_1"/>
<dbReference type="OrthoDB" id="5077at5206"/>
<dbReference type="PHI-base" id="PHI:8599"/>
<dbReference type="Proteomes" id="UP000010091">
    <property type="component" value="Chromosome 5"/>
</dbReference>
<dbReference type="GO" id="GO:0005576">
    <property type="term" value="C:extracellular region"/>
    <property type="evidence" value="ECO:0000314"/>
    <property type="project" value="UniProtKB"/>
</dbReference>
<dbReference type="GO" id="GO:0009277">
    <property type="term" value="C:fungal-type cell wall"/>
    <property type="evidence" value="ECO:0000314"/>
    <property type="project" value="UniProtKB"/>
</dbReference>
<dbReference type="GO" id="GO:0005886">
    <property type="term" value="C:plasma membrane"/>
    <property type="evidence" value="ECO:0000314"/>
    <property type="project" value="UniProtKB"/>
</dbReference>
<dbReference type="GO" id="GO:0098552">
    <property type="term" value="C:side of membrane"/>
    <property type="evidence" value="ECO:0007669"/>
    <property type="project" value="UniProtKB-KW"/>
</dbReference>
<dbReference type="GO" id="GO:0008061">
    <property type="term" value="F:chitin binding"/>
    <property type="evidence" value="ECO:0007669"/>
    <property type="project" value="UniProtKB-KW"/>
</dbReference>
<dbReference type="GO" id="GO:0004099">
    <property type="term" value="F:chitin deacetylase activity"/>
    <property type="evidence" value="ECO:0000315"/>
    <property type="project" value="UniProtKB"/>
</dbReference>
<dbReference type="GO" id="GO:0046872">
    <property type="term" value="F:metal ion binding"/>
    <property type="evidence" value="ECO:0007669"/>
    <property type="project" value="UniProtKB-KW"/>
</dbReference>
<dbReference type="GO" id="GO:0071555">
    <property type="term" value="P:cell wall organization"/>
    <property type="evidence" value="ECO:0007669"/>
    <property type="project" value="UniProtKB-KW"/>
</dbReference>
<dbReference type="GO" id="GO:0006032">
    <property type="term" value="P:chitin catabolic process"/>
    <property type="evidence" value="ECO:0000316"/>
    <property type="project" value="UniProtKB"/>
</dbReference>
<dbReference type="GO" id="GO:0009272">
    <property type="term" value="P:fungal-type cell wall biogenesis"/>
    <property type="evidence" value="ECO:0000316"/>
    <property type="project" value="UniProtKB"/>
</dbReference>
<dbReference type="GO" id="GO:0000272">
    <property type="term" value="P:polysaccharide catabolic process"/>
    <property type="evidence" value="ECO:0007669"/>
    <property type="project" value="UniProtKB-KW"/>
</dbReference>
<dbReference type="CDD" id="cd10952">
    <property type="entry name" value="CE4_MrCDA_like"/>
    <property type="match status" value="1"/>
</dbReference>
<dbReference type="FunFam" id="3.20.20.370:FF:000004">
    <property type="entry name" value="Related to Chitin deacetylase"/>
    <property type="match status" value="1"/>
</dbReference>
<dbReference type="Gene3D" id="3.20.20.370">
    <property type="entry name" value="Glycoside hydrolase/deacetylase"/>
    <property type="match status" value="1"/>
</dbReference>
<dbReference type="InterPro" id="IPR011330">
    <property type="entry name" value="Glyco_hydro/deAcase_b/a-brl"/>
</dbReference>
<dbReference type="InterPro" id="IPR002509">
    <property type="entry name" value="NODB_dom"/>
</dbReference>
<dbReference type="InterPro" id="IPR050248">
    <property type="entry name" value="Polysacc_deacetylase_ArnD"/>
</dbReference>
<dbReference type="PANTHER" id="PTHR10587:SF98">
    <property type="entry name" value="CHITIN DEACETYLASE"/>
    <property type="match status" value="1"/>
</dbReference>
<dbReference type="PANTHER" id="PTHR10587">
    <property type="entry name" value="GLYCOSYL TRANSFERASE-RELATED"/>
    <property type="match status" value="1"/>
</dbReference>
<dbReference type="Pfam" id="PF01522">
    <property type="entry name" value="Polysacc_deac_1"/>
    <property type="match status" value="1"/>
</dbReference>
<dbReference type="SUPFAM" id="SSF88713">
    <property type="entry name" value="Glycoside hydrolase/deacetylase"/>
    <property type="match status" value="1"/>
</dbReference>
<dbReference type="PROSITE" id="PS51677">
    <property type="entry name" value="NODB"/>
    <property type="match status" value="1"/>
</dbReference>
<proteinExistence type="evidence at protein level"/>
<accession>J9VND2</accession>
<feature type="signal peptide" evidence="2">
    <location>
        <begin position="1"/>
        <end position="19"/>
    </location>
</feature>
<feature type="chain" id="PRO_5003827992" description="Chitin deacetylase 2" evidence="2">
    <location>
        <begin position="20"/>
        <end position="429"/>
    </location>
</feature>
<feature type="propeptide" id="PRO_0000451810" description="Removed in mature form" evidence="2">
    <location>
        <begin position="430"/>
        <end position="455"/>
    </location>
</feature>
<feature type="domain" description="NodB homology" evidence="4">
    <location>
        <begin position="157"/>
        <end position="347"/>
    </location>
</feature>
<feature type="region of interest" description="Disordered" evidence="5">
    <location>
        <begin position="381"/>
        <end position="423"/>
    </location>
</feature>
<feature type="active site" description="Proton acceptor" evidence="4">
    <location>
        <position position="164"/>
    </location>
</feature>
<feature type="active site" description="Proton donor" evidence="4">
    <location>
        <position position="321"/>
    </location>
</feature>
<feature type="binding site" evidence="1">
    <location>
        <position position="164"/>
    </location>
    <ligand>
        <name>acetate</name>
        <dbReference type="ChEBI" id="CHEBI:30089"/>
    </ligand>
</feature>
<feature type="binding site" evidence="4">
    <location>
        <position position="165"/>
    </location>
    <ligand>
        <name>Co(2+)</name>
        <dbReference type="ChEBI" id="CHEBI:48828"/>
    </ligand>
</feature>
<feature type="binding site" evidence="4">
    <location>
        <position position="214"/>
    </location>
    <ligand>
        <name>Co(2+)</name>
        <dbReference type="ChEBI" id="CHEBI:48828"/>
    </ligand>
</feature>
<feature type="binding site" evidence="4">
    <location>
        <position position="218"/>
    </location>
    <ligand>
        <name>Co(2+)</name>
        <dbReference type="ChEBI" id="CHEBI:48828"/>
    </ligand>
</feature>
<feature type="binding site" evidence="1">
    <location>
        <position position="255"/>
    </location>
    <ligand>
        <name>acetate</name>
        <dbReference type="ChEBI" id="CHEBI:30089"/>
    </ligand>
</feature>
<feature type="lipid moiety-binding region" description="GPI-anchor amidated serine" evidence="2">
    <location>
        <position position="429"/>
    </location>
</feature>
<feature type="glycosylation site" description="N-linked (GlcNAc...) asparagine" evidence="3">
    <location>
        <position position="86"/>
    </location>
</feature>
<feature type="glycosylation site" description="N-linked (GlcNAc...) asparagine" evidence="3">
    <location>
        <position position="98"/>
    </location>
</feature>
<feature type="glycosylation site" description="N-linked (GlcNAc...) asparagine" evidence="3">
    <location>
        <position position="122"/>
    </location>
</feature>
<feature type="glycosylation site" description="N-linked (GlcNAc...) asparagine" evidence="3">
    <location>
        <position position="142"/>
    </location>
</feature>
<feature type="glycosylation site" description="N-linked (GlcNAc...) asparagine" evidence="3">
    <location>
        <position position="168"/>
    </location>
</feature>
<feature type="glycosylation site" description="N-linked (GlcNAc...) asparagine" evidence="3">
    <location>
        <position position="270"/>
    </location>
</feature>
<feature type="glycosylation site" description="N-linked (GlcNAc...) asparagine" evidence="3">
    <location>
        <position position="308"/>
    </location>
</feature>
<feature type="glycosylation site" description="N-linked (GlcNAc...) asparagine" evidence="3">
    <location>
        <position position="325"/>
    </location>
</feature>
<feature type="glycosylation site" description="N-linked (GlcNAc...) asparagine" evidence="3">
    <location>
        <position position="353"/>
    </location>
</feature>
<feature type="glycosylation site" description="N-linked (GlcNAc...) asparagine" evidence="3">
    <location>
        <position position="362"/>
    </location>
</feature>
<feature type="glycosylation site" description="N-linked (GlcNAc...) asparagine" evidence="3">
    <location>
        <position position="377"/>
    </location>
</feature>
<feature type="glycosylation site" description="N-linked (GlcNAc...) asparagine" evidence="3">
    <location>
        <position position="426"/>
    </location>
</feature>
<protein>
    <recommendedName>
        <fullName evidence="13">Chitin deacetylase 2</fullName>
        <ecNumber evidence="15 16">3.5.1.41</ecNumber>
    </recommendedName>
</protein>
<name>CDA2_CRYNH</name>
<gene>
    <name evidence="13" type="primary">CDA2</name>
    <name evidence="13" type="synonym">MP98</name>
    <name evidence="17" type="ORF">CNAG_01230</name>
</gene>
<comment type="function">
    <text evidence="6 7 8 9 12">Hydrolyzes the N-acetamido groups of N-acetyl-D-glucosamine residues in chitin to form chitosan and acetate (PubMed:17400891, PubMed:22354955). Chitosan is required to anchor melanin to the cell wall, for maintenance of cell wall integrity, and for proper cytokinesis (PubMed:17400891). Chitosan offers an advantage during infection as it is less readily detected than chitin by host immunosurveillance mechanisms (PubMed:21784998, PubMed:27165801, PubMed:32071275).</text>
</comment>
<comment type="catalytic activity">
    <reaction evidence="15 16">
        <text>[(1-&gt;4)-N-acetyl-beta-D-glucosaminyl](n) + n H2O = chitosan + n acetate</text>
        <dbReference type="Rhea" id="RHEA:10464"/>
        <dbReference type="Rhea" id="RHEA-COMP:9593"/>
        <dbReference type="Rhea" id="RHEA-COMP:9597"/>
        <dbReference type="ChEBI" id="CHEBI:15377"/>
        <dbReference type="ChEBI" id="CHEBI:17029"/>
        <dbReference type="ChEBI" id="CHEBI:30089"/>
        <dbReference type="ChEBI" id="CHEBI:57704"/>
        <dbReference type="EC" id="3.5.1.41"/>
    </reaction>
    <physiologicalReaction direction="left-to-right" evidence="15 16">
        <dbReference type="Rhea" id="RHEA:10465"/>
    </physiologicalReaction>
</comment>
<comment type="cofactor">
    <cofactor evidence="1">
        <name>Co(2+)</name>
        <dbReference type="ChEBI" id="CHEBI:48828"/>
    </cofactor>
</comment>
<comment type="subcellular location">
    <subcellularLocation>
        <location evidence="8">Secreted</location>
    </subcellularLocation>
    <subcellularLocation>
        <location evidence="8">Secreted</location>
        <location evidence="8">Cell wall</location>
    </subcellularLocation>
    <subcellularLocation>
        <location evidence="8">Cell membrane</location>
        <topology evidence="8">Lipid-anchor</topology>
        <topology evidence="8">GPI-anchor</topology>
    </subcellularLocation>
    <text evidence="8">GPI-anchored cell membrane protein (GPI-PMP) (PubMed:22354955). Non-covalently associated to the cell wall independently of both its GPI-anchor and beta-1,6-glucan (PubMed:22354955). Cell membrane localization is critical for effective deacetylase activity (PubMed:22354955).</text>
</comment>
<comment type="developmental stage">
    <text evidence="6">Expressed during unicellular vegetative growth.</text>
</comment>
<comment type="induction">
    <text evidence="11">Repressed by the antifungal agent caspofungin.</text>
</comment>
<comment type="PTM">
    <text evidence="8">The GPI anchor is required for the attachment to the cell membrane but not for cell surface targeting.</text>
</comment>
<comment type="disruption phenotype">
    <text evidence="6 7 9 12">Triple knockout of CDA1, CDA2 and CDA3 results in an absence of cell wall chitosan, melanization of surrounding media, an increase in capsule size, sensitivity to cell wall (sodium dodecyl sulfate), osmotic (NaCl) and heat stress, and avirulence in a mouse intranasal infection model.</text>
</comment>
<comment type="biotechnology">
    <text evidence="9 10">Recombinant CDA2 is a potential vaccine candidiate; induces protective immunity in mice against infection (PubMed:29184017). A strain lacking CDA1, CDA2, and CDA3 is a potential vaccine candidate; inoculation with heat-killed CDA1-CDA2-CDA3 knockout cells in mouse induces protective immunity to subsequent virulent fungal infection (PubMed:27165801).</text>
</comment>
<comment type="similarity">
    <text evidence="14">Belongs to the polysaccharide deacetylase family.</text>
</comment>
<keyword id="KW-0119">Carbohydrate metabolism</keyword>
<keyword id="KW-1003">Cell membrane</keyword>
<keyword id="KW-0134">Cell wall</keyword>
<keyword id="KW-0961">Cell wall biogenesis/degradation</keyword>
<keyword id="KW-0146">Chitin degradation</keyword>
<keyword id="KW-0147">Chitin-binding</keyword>
<keyword id="KW-0170">Cobalt</keyword>
<keyword id="KW-0325">Glycoprotein</keyword>
<keyword id="KW-0336">GPI-anchor</keyword>
<keyword id="KW-0378">Hydrolase</keyword>
<keyword id="KW-0449">Lipoprotein</keyword>
<keyword id="KW-0472">Membrane</keyword>
<keyword id="KW-0479">Metal-binding</keyword>
<keyword id="KW-0624">Polysaccharide degradation</keyword>
<keyword id="KW-0964">Secreted</keyword>
<keyword id="KW-0732">Signal</keyword>
<organism evidence="18">
    <name type="scientific">Cryptococcus neoformans var. grubii serotype A (strain H99 / ATCC 208821 / CBS 10515 / FGSC 9487)</name>
    <name type="common">Filobasidiella neoformans var. grubii</name>
    <dbReference type="NCBI Taxonomy" id="235443"/>
    <lineage>
        <taxon>Eukaryota</taxon>
        <taxon>Fungi</taxon>
        <taxon>Dikarya</taxon>
        <taxon>Basidiomycota</taxon>
        <taxon>Agaricomycotina</taxon>
        <taxon>Tremellomycetes</taxon>
        <taxon>Tremellales</taxon>
        <taxon>Cryptococcaceae</taxon>
        <taxon>Cryptococcus</taxon>
        <taxon>Cryptococcus neoformans species complex</taxon>
    </lineage>
</organism>
<reference evidence="18" key="1">
    <citation type="journal article" date="2014" name="PLoS Genet.">
        <title>Analysis of the genome and transcriptome of Cryptococcus neoformans var. grubii reveals complex RNA expression and microevolution leading to virulence attenuation.</title>
        <authorList>
            <person name="Janbon G."/>
            <person name="Ormerod K.L."/>
            <person name="Paulet D."/>
            <person name="Byrnes E.J. III"/>
            <person name="Yadav V."/>
            <person name="Chatterjee G."/>
            <person name="Mullapudi N."/>
            <person name="Hon C.-C."/>
            <person name="Billmyre R.B."/>
            <person name="Brunel F."/>
            <person name="Bahn Y.-S."/>
            <person name="Chen W."/>
            <person name="Chen Y."/>
            <person name="Chow E.W.L."/>
            <person name="Coppee J.-Y."/>
            <person name="Floyd-Averette A."/>
            <person name="Gaillardin C."/>
            <person name="Gerik K.J."/>
            <person name="Goldberg J."/>
            <person name="Gonzalez-Hilarion S."/>
            <person name="Gujja S."/>
            <person name="Hamlin J.L."/>
            <person name="Hsueh Y.-P."/>
            <person name="Ianiri G."/>
            <person name="Jones S."/>
            <person name="Kodira C.D."/>
            <person name="Kozubowski L."/>
            <person name="Lam W."/>
            <person name="Marra M."/>
            <person name="Mesner L.D."/>
            <person name="Mieczkowski P.A."/>
            <person name="Moyrand F."/>
            <person name="Nielsen K."/>
            <person name="Proux C."/>
            <person name="Rossignol T."/>
            <person name="Schein J.E."/>
            <person name="Sun S."/>
            <person name="Wollschlaeger C."/>
            <person name="Wood I.A."/>
            <person name="Zeng Q."/>
            <person name="Neuveglise C."/>
            <person name="Newlon C.S."/>
            <person name="Perfect J.R."/>
            <person name="Lodge J.K."/>
            <person name="Idnurm A."/>
            <person name="Stajich J.E."/>
            <person name="Kronstad J.W."/>
            <person name="Sanyal K."/>
            <person name="Heitman J."/>
            <person name="Fraser J.A."/>
            <person name="Cuomo C.A."/>
            <person name="Dietrich F.S."/>
        </authorList>
    </citation>
    <scope>NUCLEOTIDE SEQUENCE [LARGE SCALE GENOMIC DNA]</scope>
    <source>
        <strain>H99 / ATCC 208821 / CBS 10515 / FGSC 9487</strain>
    </source>
</reference>
<reference evidence="14" key="2">
    <citation type="journal article" date="2007" name="Eukaryot. Cell">
        <title>Chitosan, the deacetylated form of chitin, is necessary for cell wall integrity in Cryptococcus neoformans.</title>
        <authorList>
            <person name="Baker L.G."/>
            <person name="Specht C.A."/>
            <person name="Donlin M.J."/>
            <person name="Lodge J.K."/>
        </authorList>
    </citation>
    <scope>FUNCTION</scope>
    <scope>CATALYTIC ACTIVITY</scope>
    <scope>DEVELOPMENTAL STAGE</scope>
    <scope>DISRUPTION PHENOTYPE</scope>
    <source>
        <strain>KN99</strain>
    </source>
</reference>
<reference evidence="14" key="3">
    <citation type="journal article" date="2011" name="Eukaryot. Cell">
        <title>Cell wall chitosan is necessary for virulence in the opportunistic pathogen Cryptococcus neoformans.</title>
        <authorList>
            <person name="Baker L.G."/>
            <person name="Specht C.A."/>
            <person name="Lodge J.K."/>
        </authorList>
    </citation>
    <scope>FUNCTION</scope>
    <scope>DISRUPTION PHENOTYPE</scope>
    <source>
        <strain>KN99</strain>
    </source>
</reference>
<reference evidence="14" key="4">
    <citation type="journal article" date="2012" name="MBio">
        <title>A glycosylphosphatidylinositol anchor is required for membrane localization but dispensable for cell wall association of chitin deacetylase 2 in Cryptococcus neoformans.</title>
        <authorList>
            <person name="Gilbert N.M."/>
            <person name="Baker L.G."/>
            <person name="Specht C.A."/>
            <person name="Lodge J.K."/>
        </authorList>
    </citation>
    <scope>FUNCTION</scope>
    <scope>CATALYTIC ACTIVITY</scope>
    <scope>SUBCELLULAR LOCATION</scope>
    <scope>DISRUPTION PHENOTYPE</scope>
    <source>
        <strain>H99 / ATCC 208821 / CBS 10515 / FGSC 9487</strain>
        <strain>KN99</strain>
    </source>
</reference>
<reference evidence="14" key="5">
    <citation type="journal article" date="2016" name="MBio">
        <title>Induction of Protective Immunity to Cryptococcal Infection in Mice by a Heat-Killed, Chitosan-Deficient Strain of Cryptococcus neoformans.</title>
        <authorList>
            <person name="Upadhya R."/>
            <person name="Lam W.C."/>
            <person name="Maybruck B."/>
            <person name="Specht C.A."/>
            <person name="Levitz S.M."/>
            <person name="Lodge J.K."/>
        </authorList>
    </citation>
    <scope>FUNCTION</scope>
    <scope>DISRUPTION PHENOTYPE</scope>
    <scope>BIOTECHNOLOGY</scope>
    <source>
        <strain>KN99</strain>
    </source>
</reference>
<reference evidence="14" key="6">
    <citation type="journal article" date="2017" name="MBio">
        <title>Vaccination with Recombinant Cryptococcus Proteins in Glucan Particles Protects Mice against Cryptococcosis in a Manner Dependent upon Mouse Strain and Cryptococcal Species.</title>
        <authorList>
            <person name="Specht C.A."/>
            <person name="Lee C.K."/>
            <person name="Huang H."/>
            <person name="Hester M.M."/>
            <person name="Liu J."/>
            <person name="Luckie B.A."/>
            <person name="Torres Santana M.A."/>
            <person name="Mirza Z."/>
            <person name="Khoshkenar P."/>
            <person name="Abraham A."/>
            <person name="Shen Z.T."/>
            <person name="Lodge J.K."/>
            <person name="Akalin A."/>
            <person name="Homan J."/>
            <person name="Ostroff G.R."/>
            <person name="Levitz S.M."/>
        </authorList>
    </citation>
    <scope>BIOTECHNOLOGY</scope>
</reference>
<reference evidence="14" key="7">
    <citation type="journal article" date="2019" name="Genetics">
        <title>Roles for Stress Response and Cell Wall Biosynthesis Pathways in Caspofungin Tolerance in Cryptococcus neoformans.</title>
        <authorList>
            <person name="Pianalto K.M."/>
            <person name="Billmyre R.B."/>
            <person name="Telzrow C.L."/>
            <person name="Alspaugh J.A."/>
        </authorList>
    </citation>
    <scope>INDUCTION</scope>
</reference>
<reference evidence="14" key="8">
    <citation type="journal article" date="2020" name="MBio">
        <title>Cryptococcus neoformans Chitin Synthase 3 Plays a Critical Role in Dampening Host Inflammatory Responses.</title>
        <authorList>
            <person name="Hole C.R."/>
            <person name="Lam W.C."/>
            <person name="Upadhya R."/>
            <person name="Lodge J.K."/>
        </authorList>
    </citation>
    <scope>FUNCTION</scope>
    <scope>DISRUPTION PHENOTYPE</scope>
</reference>
<sequence>MIPSTAAALLTLTAGAAFAHTGCGGHEIGRRNVGGPMLYRRAVTDEASAAVSTDINTECTAYSYAPVTELISSFPTIWQTASIPSNDTEAQQLFGKINSTLNTKIPNDVPHGTPTGDWTGVNYSNSDPDCWWTHNKCTTPSNDTGLQADISIAPEPMTWGLGFDDGPNCSHNALYDLLLENNQKATMFFIGSNVLDWPLQAMRAHDEGHEICVHTWSHQYMTALSNEVVFAELYYTQKAIKAVLGVTPQCWRPPYGDVDNRVRMIAEGLNLTTIIWSDDTDDWAAGTNGVTEQDVTNNYQSVIDKAGNGTYTTHGPVVLNHELTNYTMSVFMTMFPKIKSAFNYIVPICTAYNITQPYAESNITCPNFETYISGVTNISSSTTQKDGSSSTNTASGSGAAGSASATSSSDDSSSSGGSSGSSGSNNASSGALGMFDSLSGVGLILGGVVAGVMLL</sequence>